<keyword id="KW-1157">Cap snatching</keyword>
<keyword id="KW-1262">Eukaryotic host gene expression shutoff by virus</keyword>
<keyword id="KW-1191">Eukaryotic host transcription shutoff by virus</keyword>
<keyword id="KW-1190">Host gene expression shutoff by virus</keyword>
<keyword id="KW-1045">Host mitochondrion</keyword>
<keyword id="KW-1048">Host nucleus</keyword>
<keyword id="KW-0945">Host-virus interaction</keyword>
<keyword id="KW-1090">Inhibition of host innate immune response by virus</keyword>
<keyword id="KW-1097">Inhibition of host MAVS by virus</keyword>
<keyword id="KW-1113">Inhibition of host RLR pathway by virus</keyword>
<keyword id="KW-1104">Inhibition of host RNA polymerase II by virus</keyword>
<keyword id="KW-0506">mRNA capping</keyword>
<keyword id="KW-0507">mRNA processing</keyword>
<keyword id="KW-0899">Viral immunoevasion</keyword>
<keyword id="KW-1195">Viral transcription</keyword>
<keyword id="KW-0946">Virion</keyword>
<reference key="1">
    <citation type="submission" date="2008-06" db="EMBL/GenBank/DDBJ databases">
        <title>The NIAID influenza genome sequencing project.</title>
        <authorList>
            <person name="Spiro D."/>
            <person name="Halpin R."/>
            <person name="Boyne A."/>
            <person name="Bera J."/>
            <person name="Ghedin E."/>
            <person name="Hostetler J."/>
            <person name="Fedorova N."/>
            <person name="Kim M."/>
            <person name="Zaborsky J."/>
            <person name="Overton L."/>
            <person name="Djuric K."/>
            <person name="Sarmiento M."/>
            <person name="Sitz J."/>
            <person name="Katzel D."/>
            <person name="Webster R.G."/>
            <person name="Hoffmann E."/>
            <person name="Krauss S."/>
            <person name="Naeve C."/>
            <person name="Bolotov P."/>
            <person name="Bao Y."/>
            <person name="Sanders R."/>
            <person name="Dernovoy D."/>
            <person name="Kiryutin B."/>
            <person name="Lipman D.J."/>
            <person name="Tatusova T."/>
        </authorList>
    </citation>
    <scope>NUCLEOTIDE SEQUENCE [GENOMIC RNA]</scope>
</reference>
<reference key="2">
    <citation type="submission" date="2008-06" db="EMBL/GenBank/DDBJ databases">
        <authorList>
            <consortium name="The NIAID Influenza Genome Sequencing Consortium"/>
        </authorList>
    </citation>
    <scope>NUCLEOTIDE SEQUENCE [GENOMIC RNA]</scope>
</reference>
<comment type="function">
    <text evidence="1">Plays an essential role in transcription initiation and cap-stealing mechanism, in which cellular capped pre-mRNAs are used to generate primers for viral transcription. Recognizes and binds the 7-methylguanosine-containing cap of the target pre-RNA which is subsequently cleaved after 10-13 nucleotides by the viral protein PA. Plays a role in the initiation of the viral genome replication and modulates the activity of the ribonucleoprotein (RNP) complex. In addition, participates in the inhibition of type I interferon induction through interaction with and inhibition of the host mitochondrial antiviral signaling protein MAVS.</text>
</comment>
<comment type="subunit">
    <text evidence="1">Influenza RNA polymerase is composed of three subunits: PB1, PB2 and PA. Interacts (via N-terminus) with PB1 (via C-terminus). Interacts with nucleoprotein NP (via N-terminus). Interacts (via N-terminus) with host MAVS (via N-terminus); this interaction inhibits host innate immune response.</text>
</comment>
<comment type="subcellular location">
    <subcellularLocation>
        <location evidence="1">Virion</location>
    </subcellularLocation>
    <subcellularLocation>
        <location evidence="1">Host nucleus</location>
    </subcellularLocation>
    <subcellularLocation>
        <location evidence="1">Host mitochondrion</location>
    </subcellularLocation>
</comment>
<comment type="similarity">
    <text evidence="1">Belongs to the influenza viruses PB2 family.</text>
</comment>
<dbReference type="EMBL" id="CY032220">
    <property type="protein sequence ID" value="ACD85164.1"/>
    <property type="molecule type" value="Viral_cRNA"/>
</dbReference>
<dbReference type="SMR" id="B3EUR6"/>
<dbReference type="PRO" id="PR:B3EUR6"/>
<dbReference type="Proteomes" id="UP000007769">
    <property type="component" value="Genome"/>
</dbReference>
<dbReference type="GO" id="GO:0033650">
    <property type="term" value="C:host cell mitochondrion"/>
    <property type="evidence" value="ECO:0007669"/>
    <property type="project" value="UniProtKB-SubCell"/>
</dbReference>
<dbReference type="GO" id="GO:0042025">
    <property type="term" value="C:host cell nucleus"/>
    <property type="evidence" value="ECO:0007669"/>
    <property type="project" value="UniProtKB-SubCell"/>
</dbReference>
<dbReference type="GO" id="GO:0044423">
    <property type="term" value="C:virion component"/>
    <property type="evidence" value="ECO:0007669"/>
    <property type="project" value="UniProtKB-UniRule"/>
</dbReference>
<dbReference type="GO" id="GO:0003723">
    <property type="term" value="F:RNA binding"/>
    <property type="evidence" value="ECO:0007669"/>
    <property type="project" value="UniProtKB-UniRule"/>
</dbReference>
<dbReference type="GO" id="GO:0003968">
    <property type="term" value="F:RNA-directed RNA polymerase activity"/>
    <property type="evidence" value="ECO:0007669"/>
    <property type="project" value="UniProtKB-UniRule"/>
</dbReference>
<dbReference type="GO" id="GO:0006370">
    <property type="term" value="P:7-methylguanosine mRNA capping"/>
    <property type="evidence" value="ECO:0007669"/>
    <property type="project" value="UniProtKB-UniRule"/>
</dbReference>
<dbReference type="GO" id="GO:0075526">
    <property type="term" value="P:cap snatching"/>
    <property type="evidence" value="ECO:0007669"/>
    <property type="project" value="UniProtKB-UniRule"/>
</dbReference>
<dbReference type="GO" id="GO:0006351">
    <property type="term" value="P:DNA-templated transcription"/>
    <property type="evidence" value="ECO:0007669"/>
    <property type="project" value="UniProtKB-UniRule"/>
</dbReference>
<dbReference type="GO" id="GO:0039545">
    <property type="term" value="P:symbiont-mediated suppression of host cytoplasmic pattern recognition receptor signaling pathway via inhibition of MAVS activity"/>
    <property type="evidence" value="ECO:0007669"/>
    <property type="project" value="UniProtKB-UniRule"/>
</dbReference>
<dbReference type="GO" id="GO:0039657">
    <property type="term" value="P:symbiont-mediated suppression of host gene expression"/>
    <property type="evidence" value="ECO:0007669"/>
    <property type="project" value="UniProtKB-KW"/>
</dbReference>
<dbReference type="GO" id="GO:0039523">
    <property type="term" value="P:symbiont-mediated suppression of host mRNA transcription via inhibition of RNA polymerase II activity"/>
    <property type="evidence" value="ECO:0007669"/>
    <property type="project" value="UniProtKB-UniRule"/>
</dbReference>
<dbReference type="GO" id="GO:0039694">
    <property type="term" value="P:viral RNA genome replication"/>
    <property type="evidence" value="ECO:0007669"/>
    <property type="project" value="InterPro"/>
</dbReference>
<dbReference type="FunFam" id="3.30.30.90:FF:000001">
    <property type="entry name" value="Polymerase basic protein 2"/>
    <property type="match status" value="1"/>
</dbReference>
<dbReference type="Gene3D" id="3.30.30.90">
    <property type="entry name" value="Polymerase Basic Protein 2, C-terminal domain"/>
    <property type="match status" value="1"/>
</dbReference>
<dbReference type="HAMAP" id="MF_04062">
    <property type="entry name" value="INV_PB2"/>
    <property type="match status" value="1"/>
</dbReference>
<dbReference type="InterPro" id="IPR049110">
    <property type="entry name" value="Flu_PB2_2nd"/>
</dbReference>
<dbReference type="InterPro" id="IPR049114">
    <property type="entry name" value="Flu_PB2_6th"/>
</dbReference>
<dbReference type="InterPro" id="IPR049115">
    <property type="entry name" value="Flu_PB2_C"/>
</dbReference>
<dbReference type="InterPro" id="IPR048298">
    <property type="entry name" value="Flu_PB2_CAP-bd"/>
</dbReference>
<dbReference type="InterPro" id="IPR049111">
    <property type="entry name" value="Flu_PB2_middle"/>
</dbReference>
<dbReference type="InterPro" id="IPR049106">
    <property type="entry name" value="Flu_PB2_N"/>
</dbReference>
<dbReference type="InterPro" id="IPR001591">
    <property type="entry name" value="INV_PB2"/>
</dbReference>
<dbReference type="InterPro" id="IPR049113">
    <property type="entry name" value="PB2_helical"/>
</dbReference>
<dbReference type="InterPro" id="IPR037258">
    <property type="entry name" value="PDB2_C"/>
</dbReference>
<dbReference type="Pfam" id="PF20947">
    <property type="entry name" value="Flu_PB2_1st"/>
    <property type="match status" value="1"/>
</dbReference>
<dbReference type="Pfam" id="PF20948">
    <property type="entry name" value="Flu_PB2_2nd"/>
    <property type="match status" value="1"/>
</dbReference>
<dbReference type="Pfam" id="PF20949">
    <property type="entry name" value="Flu_PB2_3rd"/>
    <property type="match status" value="1"/>
</dbReference>
<dbReference type="Pfam" id="PF20950">
    <property type="entry name" value="Flu_PB2_4th"/>
    <property type="match status" value="1"/>
</dbReference>
<dbReference type="Pfam" id="PF00604">
    <property type="entry name" value="Flu_PB2_5th"/>
    <property type="match status" value="1"/>
</dbReference>
<dbReference type="Pfam" id="PF20951">
    <property type="entry name" value="Flu_PB2_6th"/>
    <property type="match status" value="1"/>
</dbReference>
<dbReference type="Pfam" id="PF20952">
    <property type="entry name" value="Flu_PB2_7th"/>
    <property type="match status" value="1"/>
</dbReference>
<dbReference type="SUPFAM" id="SSF160453">
    <property type="entry name" value="PB2 C-terminal domain-like"/>
    <property type="match status" value="1"/>
</dbReference>
<gene>
    <name evidence="1" type="primary">PB2</name>
</gene>
<sequence>MERIKELRDLMLQSRTREILTRTTVDHMAIIKKYTSGRQEKNPALRMKWMMAMKYPITADKRIIETIPERNEQGQTLWSRTSDAGSDRVMVSPLAVTWWNRNGPTASTVHYPKVYRTYFEKVERLKHGTFGPVHFRNQVKIRRRVDINPGHADLSAKEAQDVIMEVVFPNEVGARILTSESQLMITKEKKEELQECKISPLMVAYMLERELVRKTRFLPVAGGTSSVYIEVLHLTQGACWEQLYTPGGEVRNDDVDQSLIIAARSIVRRATVSADPLASLLEMCHSTQIGGVRMVDILRQNPTEEQAVDICKAAMGLRISSSFSFGGFTFKRTSGSSTKKEEEVLTGNLQTLKIRVHEGYEEFTMVGKRATAILRKATRRLVQLIVSGRDEQSIAEAIIVAMVFSQEDCMIKAVRGDLNFVNRANQRLNPMHQLLRHFQKDAKVLFQNWGIEPIDNVMGMVGILPDLTPSTEMSMRGVRISKMGVDEYSSTERVVVSIDRFLRVRDQQGNVLLSPEEVSETQGTEKLTITYSSSMMWEVNGPESVLVNTYQWIIRNWETVKIQWSQDPTMLYNKMEFEPFQSLVPKAARGQYSGFVRTLFQQMRDVLGTFDTVQIIKLLPFAAAPPKQSRMQFSSLTVNVRGSGMRILIRGNSPVFNYNKGTKRLTVLGKDAGALTENPDEGTTGVESAVLRGFLILGREDRRYGPALSINELSSLAKGEKANVLIGQGDVVLVMKRKRDSSILTDSQTATKRIRMAIN</sequence>
<organism>
    <name type="scientific">Influenza A virus (strain A/Swine/Wisconsin/1/1961 H1N1)</name>
    <dbReference type="NCBI Taxonomy" id="383533"/>
    <lineage>
        <taxon>Viruses</taxon>
        <taxon>Riboviria</taxon>
        <taxon>Orthornavirae</taxon>
        <taxon>Negarnaviricota</taxon>
        <taxon>Polyploviricotina</taxon>
        <taxon>Insthoviricetes</taxon>
        <taxon>Articulavirales</taxon>
        <taxon>Orthomyxoviridae</taxon>
        <taxon>Alphainfluenzavirus</taxon>
        <taxon>Alphainfluenzavirus influenzae</taxon>
        <taxon>Influenza A virus</taxon>
    </lineage>
</organism>
<protein>
    <recommendedName>
        <fullName evidence="1">Polymerase basic protein 2</fullName>
    </recommendedName>
    <alternativeName>
        <fullName evidence="1">RNA-directed RNA polymerase subunit P3</fullName>
    </alternativeName>
</protein>
<name>PB2_I61A1</name>
<evidence type="ECO:0000255" key="1">
    <source>
        <dbReference type="HAMAP-Rule" id="MF_04062"/>
    </source>
</evidence>
<feature type="chain" id="PRO_0000373037" description="Polymerase basic protein 2">
    <location>
        <begin position="1"/>
        <end position="759"/>
    </location>
</feature>
<feature type="short sequence motif" description="Nuclear localization signal" evidence="1">
    <location>
        <begin position="736"/>
        <end position="739"/>
    </location>
</feature>
<feature type="site" description="Mammalian adaptation" evidence="1">
    <location>
        <position position="627"/>
    </location>
</feature>
<proteinExistence type="inferred from homology"/>
<organismHost>
    <name type="scientific">Aves</name>
    <dbReference type="NCBI Taxonomy" id="8782"/>
</organismHost>
<organismHost>
    <name type="scientific">Homo sapiens</name>
    <name type="common">Human</name>
    <dbReference type="NCBI Taxonomy" id="9606"/>
</organismHost>
<organismHost>
    <name type="scientific">Sus scrofa</name>
    <name type="common">Pig</name>
    <dbReference type="NCBI Taxonomy" id="9823"/>
</organismHost>
<accession>B3EUR6</accession>